<proteinExistence type="inferred from homology"/>
<dbReference type="EMBL" id="CR380955">
    <property type="protein sequence ID" value="CAG60216.1"/>
    <property type="molecule type" value="Genomic_DNA"/>
</dbReference>
<dbReference type="RefSeq" id="XP_447279.1">
    <property type="nucleotide sequence ID" value="XM_447279.1"/>
</dbReference>
<dbReference type="SMR" id="Q6FR65"/>
<dbReference type="FunCoup" id="Q6FR65">
    <property type="interactions" value="1721"/>
</dbReference>
<dbReference type="STRING" id="284593.Q6FR65"/>
<dbReference type="EnsemblFungi" id="CAGL0I00594g-T">
    <property type="protein sequence ID" value="CAGL0I00594g-T-p1"/>
    <property type="gene ID" value="CAGL0I00594g"/>
</dbReference>
<dbReference type="KEGG" id="cgr:2889320"/>
<dbReference type="CGD" id="CAL0132386">
    <property type="gene designation" value="CAGL0I00594g"/>
</dbReference>
<dbReference type="VEuPathDB" id="FungiDB:B1J91_I00594g"/>
<dbReference type="VEuPathDB" id="FungiDB:CAGL0I00594g"/>
<dbReference type="eggNOG" id="KOG0096">
    <property type="taxonomic scope" value="Eukaryota"/>
</dbReference>
<dbReference type="HOGENOM" id="CLU_041217_13_0_1"/>
<dbReference type="InParanoid" id="Q6FR65"/>
<dbReference type="OMA" id="FNAWDTA"/>
<dbReference type="Proteomes" id="UP000002428">
    <property type="component" value="Chromosome I"/>
</dbReference>
<dbReference type="GO" id="GO:0005737">
    <property type="term" value="C:cytoplasm"/>
    <property type="evidence" value="ECO:0007669"/>
    <property type="project" value="TreeGrafter"/>
</dbReference>
<dbReference type="GO" id="GO:0062040">
    <property type="term" value="C:fungal biofilm matrix"/>
    <property type="evidence" value="ECO:0000314"/>
    <property type="project" value="CGD"/>
</dbReference>
<dbReference type="GO" id="GO:0005634">
    <property type="term" value="C:nucleus"/>
    <property type="evidence" value="ECO:0007669"/>
    <property type="project" value="UniProtKB-SubCell"/>
</dbReference>
<dbReference type="GO" id="GO:0005525">
    <property type="term" value="F:GTP binding"/>
    <property type="evidence" value="ECO:0007669"/>
    <property type="project" value="UniProtKB-KW"/>
</dbReference>
<dbReference type="GO" id="GO:0003924">
    <property type="term" value="F:GTPase activity"/>
    <property type="evidence" value="ECO:0007669"/>
    <property type="project" value="InterPro"/>
</dbReference>
<dbReference type="GO" id="GO:0006606">
    <property type="term" value="P:protein import into nucleus"/>
    <property type="evidence" value="ECO:0007669"/>
    <property type="project" value="TreeGrafter"/>
</dbReference>
<dbReference type="GO" id="GO:0000054">
    <property type="term" value="P:ribosomal subunit export from nucleus"/>
    <property type="evidence" value="ECO:0007669"/>
    <property type="project" value="TreeGrafter"/>
</dbReference>
<dbReference type="CDD" id="cd00877">
    <property type="entry name" value="Ran"/>
    <property type="match status" value="1"/>
</dbReference>
<dbReference type="FunFam" id="3.40.50.300:FF:000131">
    <property type="entry name" value="GTP-binding nuclear protein Ran"/>
    <property type="match status" value="1"/>
</dbReference>
<dbReference type="Gene3D" id="3.40.50.300">
    <property type="entry name" value="P-loop containing nucleotide triphosphate hydrolases"/>
    <property type="match status" value="1"/>
</dbReference>
<dbReference type="InterPro" id="IPR027417">
    <property type="entry name" value="P-loop_NTPase"/>
</dbReference>
<dbReference type="InterPro" id="IPR002041">
    <property type="entry name" value="Ran_GTPase"/>
</dbReference>
<dbReference type="InterPro" id="IPR005225">
    <property type="entry name" value="Small_GTP-bd"/>
</dbReference>
<dbReference type="InterPro" id="IPR001806">
    <property type="entry name" value="Small_GTPase"/>
</dbReference>
<dbReference type="NCBIfam" id="TIGR00231">
    <property type="entry name" value="small_GTP"/>
    <property type="match status" value="1"/>
</dbReference>
<dbReference type="PANTHER" id="PTHR24071:SF0">
    <property type="entry name" value="GTP-BINDING NUCLEAR PROTEIN RAN"/>
    <property type="match status" value="1"/>
</dbReference>
<dbReference type="PANTHER" id="PTHR24071">
    <property type="entry name" value="RAN GTPASE"/>
    <property type="match status" value="1"/>
</dbReference>
<dbReference type="Pfam" id="PF00071">
    <property type="entry name" value="Ras"/>
    <property type="match status" value="1"/>
</dbReference>
<dbReference type="PRINTS" id="PR00627">
    <property type="entry name" value="GTPRANTC4"/>
</dbReference>
<dbReference type="SMART" id="SM00175">
    <property type="entry name" value="RAB"/>
    <property type="match status" value="1"/>
</dbReference>
<dbReference type="SMART" id="SM00176">
    <property type="entry name" value="RAN"/>
    <property type="match status" value="1"/>
</dbReference>
<dbReference type="SMART" id="SM00173">
    <property type="entry name" value="RAS"/>
    <property type="match status" value="1"/>
</dbReference>
<dbReference type="SMART" id="SM00174">
    <property type="entry name" value="RHO"/>
    <property type="match status" value="1"/>
</dbReference>
<dbReference type="SUPFAM" id="SSF52540">
    <property type="entry name" value="P-loop containing nucleoside triphosphate hydrolases"/>
    <property type="match status" value="1"/>
</dbReference>
<dbReference type="PROSITE" id="PS51418">
    <property type="entry name" value="RAN"/>
    <property type="match status" value="1"/>
</dbReference>
<feature type="chain" id="PRO_0000208730" description="GTP-binding nuclear protein GSP1/Ran">
    <location>
        <begin position="1"/>
        <end position="214"/>
    </location>
</feature>
<feature type="domain" description="Small GTPase Ran-type" evidence="3">
    <location>
        <begin position="4"/>
        <end position="168"/>
    </location>
</feature>
<feature type="region of interest" description="Switch-I" evidence="3">
    <location>
        <begin position="34"/>
        <end position="42"/>
    </location>
</feature>
<feature type="region of interest" description="Switch-II" evidence="3">
    <location>
        <begin position="65"/>
        <end position="81"/>
    </location>
</feature>
<feature type="binding site" evidence="2">
    <location>
        <begin position="15"/>
        <end position="22"/>
    </location>
    <ligand>
        <name>GTP</name>
        <dbReference type="ChEBI" id="CHEBI:37565"/>
    </ligand>
</feature>
<feature type="binding site" evidence="2">
    <location>
        <position position="65"/>
    </location>
    <ligand>
        <name>GTP</name>
        <dbReference type="ChEBI" id="CHEBI:37565"/>
    </ligand>
</feature>
<feature type="binding site" evidence="2">
    <location>
        <begin position="119"/>
        <end position="122"/>
    </location>
    <ligand>
        <name>GTP</name>
        <dbReference type="ChEBI" id="CHEBI:37565"/>
    </ligand>
</feature>
<feature type="binding site" evidence="2">
    <location>
        <begin position="147"/>
        <end position="149"/>
    </location>
    <ligand>
        <name>GTP</name>
        <dbReference type="ChEBI" id="CHEBI:37565"/>
    </ligand>
</feature>
<keyword id="KW-0342">GTP-binding</keyword>
<keyword id="KW-0547">Nucleotide-binding</keyword>
<keyword id="KW-0539">Nucleus</keyword>
<keyword id="KW-0653">Protein transport</keyword>
<keyword id="KW-1185">Reference proteome</keyword>
<keyword id="KW-0813">Transport</keyword>
<comment type="function">
    <text evidence="1">GTP-binding protein involved in nucleocytoplasmic transport. Required for the import of protein into the nucleus and also for RNA export. Involved in chromatin condensation and control of cell cycle (By similarity).</text>
</comment>
<comment type="subunit">
    <text evidence="2">Found in a nuclear export complex with RanGTP, exportin and pre-miRNA (By similarity).</text>
</comment>
<comment type="subcellular location">
    <subcellularLocation>
        <location evidence="1">Nucleus</location>
    </subcellularLocation>
</comment>
<comment type="similarity">
    <text evidence="3 4">Belongs to the small GTPase superfamily. Ran family.</text>
</comment>
<evidence type="ECO:0000250" key="1"/>
<evidence type="ECO:0000250" key="2">
    <source>
        <dbReference type="UniProtKB" id="P62825"/>
    </source>
</evidence>
<evidence type="ECO:0000255" key="3">
    <source>
        <dbReference type="PROSITE-ProRule" id="PRU00752"/>
    </source>
</evidence>
<evidence type="ECO:0000305" key="4"/>
<accession>Q6FR65</accession>
<reference key="1">
    <citation type="journal article" date="2004" name="Nature">
        <title>Genome evolution in yeasts.</title>
        <authorList>
            <person name="Dujon B."/>
            <person name="Sherman D."/>
            <person name="Fischer G."/>
            <person name="Durrens P."/>
            <person name="Casaregola S."/>
            <person name="Lafontaine I."/>
            <person name="de Montigny J."/>
            <person name="Marck C."/>
            <person name="Neuveglise C."/>
            <person name="Talla E."/>
            <person name="Goffard N."/>
            <person name="Frangeul L."/>
            <person name="Aigle M."/>
            <person name="Anthouard V."/>
            <person name="Babour A."/>
            <person name="Barbe V."/>
            <person name="Barnay S."/>
            <person name="Blanchin S."/>
            <person name="Beckerich J.-M."/>
            <person name="Beyne E."/>
            <person name="Bleykasten C."/>
            <person name="Boisrame A."/>
            <person name="Boyer J."/>
            <person name="Cattolico L."/>
            <person name="Confanioleri F."/>
            <person name="de Daruvar A."/>
            <person name="Despons L."/>
            <person name="Fabre E."/>
            <person name="Fairhead C."/>
            <person name="Ferry-Dumazet H."/>
            <person name="Groppi A."/>
            <person name="Hantraye F."/>
            <person name="Hennequin C."/>
            <person name="Jauniaux N."/>
            <person name="Joyet P."/>
            <person name="Kachouri R."/>
            <person name="Kerrest A."/>
            <person name="Koszul R."/>
            <person name="Lemaire M."/>
            <person name="Lesur I."/>
            <person name="Ma L."/>
            <person name="Muller H."/>
            <person name="Nicaud J.-M."/>
            <person name="Nikolski M."/>
            <person name="Oztas S."/>
            <person name="Ozier-Kalogeropoulos O."/>
            <person name="Pellenz S."/>
            <person name="Potier S."/>
            <person name="Richard G.-F."/>
            <person name="Straub M.-L."/>
            <person name="Suleau A."/>
            <person name="Swennen D."/>
            <person name="Tekaia F."/>
            <person name="Wesolowski-Louvel M."/>
            <person name="Westhof E."/>
            <person name="Wirth B."/>
            <person name="Zeniou-Meyer M."/>
            <person name="Zivanovic Y."/>
            <person name="Bolotin-Fukuhara M."/>
            <person name="Thierry A."/>
            <person name="Bouchier C."/>
            <person name="Caudron B."/>
            <person name="Scarpelli C."/>
            <person name="Gaillardin C."/>
            <person name="Weissenbach J."/>
            <person name="Wincker P."/>
            <person name="Souciet J.-L."/>
        </authorList>
    </citation>
    <scope>NUCLEOTIDE SEQUENCE [LARGE SCALE GENOMIC DNA]</scope>
    <source>
        <strain>ATCC 2001 / BCRC 20586 / JCM 3761 / NBRC 0622 / NRRL Y-65 / CBS 138</strain>
    </source>
</reference>
<name>GSP1_CANGA</name>
<organism>
    <name type="scientific">Candida glabrata (strain ATCC 2001 / BCRC 20586 / JCM 3761 / NBRC 0622 / NRRL Y-65 / CBS 138)</name>
    <name type="common">Yeast</name>
    <name type="synonym">Nakaseomyces glabratus</name>
    <dbReference type="NCBI Taxonomy" id="284593"/>
    <lineage>
        <taxon>Eukaryota</taxon>
        <taxon>Fungi</taxon>
        <taxon>Dikarya</taxon>
        <taxon>Ascomycota</taxon>
        <taxon>Saccharomycotina</taxon>
        <taxon>Saccharomycetes</taxon>
        <taxon>Saccharomycetales</taxon>
        <taxon>Saccharomycetaceae</taxon>
        <taxon>Nakaseomyces</taxon>
    </lineage>
</organism>
<sequence length="214" mass="24344">MSAEVPTFKLVLVGDGGTGKTTFVKRHLTGEFEKKYIATIGVEVHPLAFHTNFGEIKFDVWDTAGQEKFGGLRDGYYINAQCGIIMFDVTSRITYKNVPNWHRDLVRVCENIPIVLCGNKVDVKERKVKAKTITFHRKKNLQYYDISAKSNYNFEKPFLWLARKLAGNPQLEFVASPALAPPEVQVDEQLMQQYQQEMEQATALPLPDEDDADL</sequence>
<gene>
    <name type="primary">GSP1</name>
    <name type="ordered locus">CAGL0I00594g</name>
</gene>
<protein>
    <recommendedName>
        <fullName>GTP-binding nuclear protein GSP1/Ran</fullName>
    </recommendedName>
</protein>